<name>3PASE_NITEU</name>
<dbReference type="EC" id="3.6.1.25"/>
<dbReference type="EMBL" id="AL954747">
    <property type="protein sequence ID" value="CAD85407.1"/>
    <property type="molecule type" value="Genomic_DNA"/>
</dbReference>
<dbReference type="RefSeq" id="WP_011112064.1">
    <property type="nucleotide sequence ID" value="NC_004757.1"/>
</dbReference>
<dbReference type="PDB" id="2FBL">
    <property type="method" value="X-ray"/>
    <property type="resolution" value="1.90 A"/>
    <property type="chains" value="A/B=1-151"/>
</dbReference>
<dbReference type="PDB" id="3TYP">
    <property type="method" value="X-ray"/>
    <property type="resolution" value="1.90 A"/>
    <property type="chains" value="A/B=2-151"/>
</dbReference>
<dbReference type="PDBsum" id="2FBL"/>
<dbReference type="PDBsum" id="3TYP"/>
<dbReference type="SMR" id="Q82UI9"/>
<dbReference type="STRING" id="228410.NE1496"/>
<dbReference type="GeneID" id="87104670"/>
<dbReference type="KEGG" id="neu:NE1496"/>
<dbReference type="eggNOG" id="COG2954">
    <property type="taxonomic scope" value="Bacteria"/>
</dbReference>
<dbReference type="HOGENOM" id="CLU_109545_0_0_4"/>
<dbReference type="OrthoDB" id="9805588at2"/>
<dbReference type="PhylomeDB" id="Q82UI9"/>
<dbReference type="EvolutionaryTrace" id="Q82UI9"/>
<dbReference type="Proteomes" id="UP000001416">
    <property type="component" value="Chromosome"/>
</dbReference>
<dbReference type="GO" id="GO:0050355">
    <property type="term" value="F:inorganic triphosphate phosphatase activity"/>
    <property type="evidence" value="ECO:0000314"/>
    <property type="project" value="UniProtKB"/>
</dbReference>
<dbReference type="CDD" id="cd07761">
    <property type="entry name" value="CYTH-like_CthTTM-like"/>
    <property type="match status" value="1"/>
</dbReference>
<dbReference type="Gene3D" id="2.40.320.10">
    <property type="entry name" value="Hypothetical Protein Pfu-838710-001"/>
    <property type="match status" value="1"/>
</dbReference>
<dbReference type="InterPro" id="IPR033469">
    <property type="entry name" value="CYTH-like_dom_sf"/>
</dbReference>
<dbReference type="InterPro" id="IPR023577">
    <property type="entry name" value="CYTH_domain"/>
</dbReference>
<dbReference type="InterPro" id="IPR012042">
    <property type="entry name" value="NeuTTM/CthTTM-like"/>
</dbReference>
<dbReference type="PANTHER" id="PTHR40114">
    <property type="entry name" value="SLR0698 PROTEIN"/>
    <property type="match status" value="1"/>
</dbReference>
<dbReference type="PANTHER" id="PTHR40114:SF1">
    <property type="entry name" value="SLR0698 PROTEIN"/>
    <property type="match status" value="1"/>
</dbReference>
<dbReference type="Pfam" id="PF01928">
    <property type="entry name" value="CYTH"/>
    <property type="match status" value="1"/>
</dbReference>
<dbReference type="PIRSF" id="PIRSF016487">
    <property type="entry name" value="CYTH_UCP016487"/>
    <property type="match status" value="1"/>
</dbReference>
<dbReference type="SMART" id="SM01118">
    <property type="entry name" value="CYTH"/>
    <property type="match status" value="1"/>
</dbReference>
<dbReference type="SUPFAM" id="SSF55154">
    <property type="entry name" value="CYTH-like phosphatases"/>
    <property type="match status" value="1"/>
</dbReference>
<dbReference type="PROSITE" id="PS51707">
    <property type="entry name" value="CYTH"/>
    <property type="match status" value="1"/>
</dbReference>
<protein>
    <recommendedName>
        <fullName>Inorganic triphosphatase</fullName>
        <shortName>PPPase</shortName>
        <ecNumber>3.6.1.25</ecNumber>
    </recommendedName>
</protein>
<accession>Q82UI9</accession>
<sequence>MTEIERKFLVATFPDGELHAVPLRQGYLTTPTDSIELRLRQQGTEYFMTLKSEGGLSRQEYEIQIDVTQFEMLWPATEGRRVEKTRYSGKLPDGQLFELDVFAGHLSPLMLVEVEFLSEDAAQAFIPPPWFGEEVTEDKRYKNKALALSIP</sequence>
<keyword id="KW-0002">3D-structure</keyword>
<keyword id="KW-0378">Hydrolase</keyword>
<keyword id="KW-1185">Reference proteome</keyword>
<gene>
    <name type="ordered locus">NE1496</name>
</gene>
<proteinExistence type="evidence at protein level"/>
<feature type="chain" id="PRO_0000426735" description="Inorganic triphosphatase">
    <location>
        <begin position="1"/>
        <end position="151"/>
    </location>
</feature>
<feature type="domain" description="CYTH" evidence="1">
    <location>
        <begin position="1"/>
        <end position="148"/>
    </location>
</feature>
<feature type="active site" description="Proton acceptor" evidence="3">
    <location>
        <position position="27"/>
    </location>
</feature>
<feature type="mutagenesis site" description="No effect on hydrolase activity." evidence="2">
    <original>K</original>
    <variation>A</variation>
    <location>
        <position position="7"/>
    </location>
</feature>
<feature type="mutagenesis site" description="Strong loss of hydrolase activity." evidence="2">
    <original>Y</original>
    <variation>F</variation>
    <location>
        <position position="27"/>
    </location>
</feature>
<feature type="mutagenesis site" description="The affinity is strongly decreased and the catalytic efficiency is at least 1000 times lower than that of the wild-type. Manganese ions do not induce a significant activation." evidence="2">
    <original>K</original>
    <variation>R</variation>
    <location>
        <position position="51"/>
    </location>
</feature>
<feature type="mutagenesis site" description="It is 10 times less active than the wild-type and the affinity for PPPi is 2 orders of magnitude lower than for the wild-type. Mutant is more strongly activated by manganese ions than by magnesium ions, and the inhibitory effects of calcium and zinc ions are less pronounced." evidence="2">
    <original>K</original>
    <variation>A</variation>
    <location>
        <position position="84"/>
    </location>
</feature>
<feature type="strand" evidence="4">
    <location>
        <begin position="4"/>
        <end position="12"/>
    </location>
</feature>
<feature type="strand" evidence="4">
    <location>
        <begin position="19"/>
        <end position="29"/>
    </location>
</feature>
<feature type="strand" evidence="4">
    <location>
        <begin position="33"/>
        <end position="42"/>
    </location>
</feature>
<feature type="strand" evidence="4">
    <location>
        <begin position="45"/>
        <end position="51"/>
    </location>
</feature>
<feature type="strand" evidence="4">
    <location>
        <begin position="60"/>
        <end position="65"/>
    </location>
</feature>
<feature type="helix" evidence="4">
    <location>
        <begin position="67"/>
        <end position="73"/>
    </location>
</feature>
<feature type="helix" evidence="4">
    <location>
        <begin position="74"/>
        <end position="77"/>
    </location>
</feature>
<feature type="strand" evidence="4">
    <location>
        <begin position="80"/>
        <end position="90"/>
    </location>
</feature>
<feature type="strand" evidence="4">
    <location>
        <begin position="96"/>
        <end position="102"/>
    </location>
</feature>
<feature type="helix" evidence="4">
    <location>
        <begin position="104"/>
        <end position="106"/>
    </location>
</feature>
<feature type="strand" evidence="4">
    <location>
        <begin position="110"/>
        <end position="118"/>
    </location>
</feature>
<feature type="helix" evidence="4">
    <location>
        <begin position="119"/>
        <end position="124"/>
    </location>
</feature>
<feature type="strand" evidence="4">
    <location>
        <begin position="131"/>
        <end position="134"/>
    </location>
</feature>
<feature type="helix" evidence="4">
    <location>
        <begin position="139"/>
        <end position="141"/>
    </location>
</feature>
<feature type="helix" evidence="4">
    <location>
        <begin position="143"/>
        <end position="148"/>
    </location>
</feature>
<reference key="1">
    <citation type="journal article" date="2003" name="J. Bacteriol.">
        <title>Complete genome sequence of the ammonia-oxidizing bacterium and obligate chemolithoautotroph Nitrosomonas europaea.</title>
        <authorList>
            <person name="Chain P."/>
            <person name="Lamerdin J.E."/>
            <person name="Larimer F.W."/>
            <person name="Regala W."/>
            <person name="Lao V."/>
            <person name="Land M.L."/>
            <person name="Hauser L."/>
            <person name="Hooper A.B."/>
            <person name="Klotz M.G."/>
            <person name="Norton J."/>
            <person name="Sayavedra-Soto L.A."/>
            <person name="Arciero D.M."/>
            <person name="Hommes N.G."/>
            <person name="Whittaker M.M."/>
            <person name="Arp D.J."/>
        </authorList>
    </citation>
    <scope>NUCLEOTIDE SEQUENCE [LARGE SCALE GENOMIC DNA]</scope>
    <source>
        <strain>ATCC 19718 / CIP 103999 / KCTC 2705 / NBRC 14298</strain>
    </source>
</reference>
<reference key="2">
    <citation type="submission" date="2005-12" db="PDB data bank">
        <title>The crystal structure of the hypothetical protein NE1496.</title>
        <authorList>
            <person name="Lunin V.V."/>
            <person name="Skarina T."/>
            <person name="Onopriyenko O."/>
            <person name="Binkowski T.A."/>
            <person name="Joachimiak A."/>
            <person name="Edwards A.M."/>
            <person name="Savchenko A."/>
        </authorList>
    </citation>
    <scope>X-RAY CRYSTALLOGRAPHY (1.90 ANGSTROMS)</scope>
    <scope>SUBUNIT</scope>
</reference>
<reference key="3">
    <citation type="journal article" date="2011" name="J. Biol. Chem.">
        <title>A specific inorganic triphosphatase from Nitrosomonas europaea: structure and catalytic mechanism.</title>
        <authorList>
            <person name="Delvaux D."/>
            <person name="Murty M.R."/>
            <person name="Gabelica V."/>
            <person name="Lakaye B."/>
            <person name="Lunin V.V."/>
            <person name="Skarina T."/>
            <person name="Onopriyenko O."/>
            <person name="Kohn G."/>
            <person name="Wins P."/>
            <person name="De Pauw E."/>
            <person name="Bettendorff L."/>
        </authorList>
    </citation>
    <scope>X-RAY CRYSTALLOGRAPHY (1.90 ANGSTROMS)</scope>
    <scope>FUNCTION</scope>
    <scope>CATALYTIC ACTIVITY</scope>
    <scope>MUTAGENESIS OF LYS-7; TYR-27; LYS-51 AND LYS-84</scope>
    <scope>ACTIVE SITE</scope>
    <scope>BIOPHYSICOCHEMICAL PROPERTIES</scope>
    <scope>SUBSTRATE SPECIFICITY</scope>
    <scope>REACTION MECHANISM</scope>
    <scope>ACTIVITY REGULATION</scope>
    <scope>SUBUNIT</scope>
</reference>
<organism>
    <name type="scientific">Nitrosomonas europaea (strain ATCC 19718 / CIP 103999 / KCTC 2705 / NBRC 14298)</name>
    <dbReference type="NCBI Taxonomy" id="228410"/>
    <lineage>
        <taxon>Bacteria</taxon>
        <taxon>Pseudomonadati</taxon>
        <taxon>Pseudomonadota</taxon>
        <taxon>Betaproteobacteria</taxon>
        <taxon>Nitrosomonadales</taxon>
        <taxon>Nitrosomonadaceae</taxon>
        <taxon>Nitrosomonas</taxon>
    </lineage>
</organism>
<evidence type="ECO:0000255" key="1">
    <source>
        <dbReference type="PROSITE-ProRule" id="PRU01044"/>
    </source>
</evidence>
<evidence type="ECO:0000269" key="2">
    <source>
    </source>
</evidence>
<evidence type="ECO:0000305" key="3">
    <source>
    </source>
</evidence>
<evidence type="ECO:0007829" key="4">
    <source>
        <dbReference type="PDB" id="2FBL"/>
    </source>
</evidence>
<comment type="function">
    <text evidence="2">Involved in the hydrolysis of the beta-gamma-phosphoanhydride linkage of triphosphate-containing substrates (inorganic or nucleoside-linked). Catalyzes the hydrolysis of inorganic triphosphate (PPPi). The enzyme has a strong preference for linear PPPi compared with cyclic PPPi (cyclic trimetaphosphate) and to the linear P4. The longer chains polyphosphate are not hydrolyzed. It has only a slight thiamine triphosphatase (ThTPase) activity. Nucleoside triphosphatase activity is negligible in the presence of magnesium, but a small activity is observed in the presence of manganese, in particular with GTP.</text>
</comment>
<comment type="catalytic activity">
    <reaction evidence="2">
        <text>triphosphate + H2O = phosphate + diphosphate</text>
        <dbReference type="Rhea" id="RHEA:14157"/>
        <dbReference type="ChEBI" id="CHEBI:15377"/>
        <dbReference type="ChEBI" id="CHEBI:18036"/>
        <dbReference type="ChEBI" id="CHEBI:33019"/>
        <dbReference type="ChEBI" id="CHEBI:43474"/>
        <dbReference type="EC" id="3.6.1.25"/>
    </reaction>
</comment>
<comment type="activity regulation">
    <text evidence="2">Activated by magnesium and mangenese ions, and inhibited by calcium, zinc and copper ions.</text>
</comment>
<comment type="biophysicochemical properties">
    <kinetics>
        <KM evidence="2">21 uM for PPPi (at pH 9.7 and 37 degrees Celsius)</KM>
        <KM evidence="2">40 uM for PPPi (at pH 9.7 and 50 degrees Celsius)</KM>
        <KM evidence="2">58 uM for PPPi (at pH 7.1 and 50 degrees Celsius)</KM>
        <KM evidence="2">800 uM for ATP (at pH 8.1 and 50 degrees Celsius)</KM>
        <Vmax evidence="2">910.0 umol/min/mg enzyme with PPPi as substrate (at pH 9.7 and 50 degrees Celsius)</Vmax>
        <Vmax evidence="2">240.0 umol/min/mg enzyme with PPPi as substrate (at pH 9.7 and 37 degrees Celsius)</Vmax>
        <Vmax evidence="2">60.0 umol/min/mg enzyme with PPPi as substrate (at pH 7.1 and 37 degrees Celsius)</Vmax>
        <Vmax evidence="2">1.2 umol/min/mg enzyme with ATP as substrate (at pH 8.1 and 50 degrees Celsius)</Vmax>
        <text>kcat is 288 sec(-1) for hydrolysis of PPPi (at pH 9.7 and 50 degrees Celsius). kcat is 76 sec(-1) for hydrolysis of PPPi (at pH 9.7 and 37 degrees Celsius). kcat is 19 sec(-1) for hydrolysis of PPPi (at pH 7.1 and 37 degrees Celsius). kcat is 0.36 sec(-1) for hydrolysis of ATP (at pH 8.1 and 50 degrees Celsius).</text>
    </kinetics>
    <phDependence>
        <text evidence="2">Optimum pH is around 9.7.</text>
    </phDependence>
    <temperatureDependence>
        <text evidence="2">Optimum temperature is between 50 and 55 degrees Celsius.</text>
    </temperatureDependence>
</comment>
<comment type="subunit">
    <text evidence="2">Homodimer.</text>
</comment>